<reference key="1">
    <citation type="submission" date="2007-11" db="EMBL/GenBank/DDBJ databases">
        <authorList>
            <consortium name="The Salmonella enterica serovar Paratyphi B Genome Sequencing Project"/>
            <person name="McClelland M."/>
            <person name="Sanderson E.K."/>
            <person name="Porwollik S."/>
            <person name="Spieth J."/>
            <person name="Clifton W.S."/>
            <person name="Fulton R."/>
            <person name="Cordes M."/>
            <person name="Wollam A."/>
            <person name="Shah N."/>
            <person name="Pepin K."/>
            <person name="Bhonagiri V."/>
            <person name="Nash W."/>
            <person name="Johnson M."/>
            <person name="Thiruvilangam P."/>
            <person name="Wilson R."/>
        </authorList>
    </citation>
    <scope>NUCLEOTIDE SEQUENCE [LARGE SCALE GENOMIC DNA]</scope>
    <source>
        <strain>ATCC BAA-1250 / SPB7</strain>
    </source>
</reference>
<comment type="function">
    <text evidence="1">Peptidoglycan polymerase that catalyzes glycan chain elongation from lipid-linked precursors.</text>
</comment>
<comment type="catalytic activity">
    <reaction evidence="1">
        <text>[GlcNAc-(1-&gt;4)-Mur2Ac(oyl-L-Ala-gamma-D-Glu-L-Lys-D-Ala-D-Ala)](n)-di-trans,octa-cis-undecaprenyl diphosphate + beta-D-GlcNAc-(1-&gt;4)-Mur2Ac(oyl-L-Ala-gamma-D-Glu-L-Lys-D-Ala-D-Ala)-di-trans,octa-cis-undecaprenyl diphosphate = [GlcNAc-(1-&gt;4)-Mur2Ac(oyl-L-Ala-gamma-D-Glu-L-Lys-D-Ala-D-Ala)](n+1)-di-trans,octa-cis-undecaprenyl diphosphate + di-trans,octa-cis-undecaprenyl diphosphate + H(+)</text>
        <dbReference type="Rhea" id="RHEA:23708"/>
        <dbReference type="Rhea" id="RHEA-COMP:9602"/>
        <dbReference type="Rhea" id="RHEA-COMP:9603"/>
        <dbReference type="ChEBI" id="CHEBI:15378"/>
        <dbReference type="ChEBI" id="CHEBI:58405"/>
        <dbReference type="ChEBI" id="CHEBI:60033"/>
        <dbReference type="ChEBI" id="CHEBI:78435"/>
        <dbReference type="EC" id="2.4.99.28"/>
    </reaction>
</comment>
<comment type="pathway">
    <text evidence="1">Cell wall biogenesis; peptidoglycan biosynthesis.</text>
</comment>
<comment type="subcellular location">
    <subcellularLocation>
        <location evidence="1">Cell inner membrane</location>
        <topology evidence="1">Single-pass membrane protein</topology>
    </subcellularLocation>
</comment>
<comment type="similarity">
    <text evidence="1">Belongs to the glycosyltransferase 51 family.</text>
</comment>
<accession>A9N776</accession>
<proteinExistence type="inferred from homology"/>
<evidence type="ECO:0000255" key="1">
    <source>
        <dbReference type="HAMAP-Rule" id="MF_00766"/>
    </source>
</evidence>
<feature type="chain" id="PRO_1000083543" description="Biosynthetic peptidoglycan transglycosylase">
    <location>
        <begin position="1"/>
        <end position="242"/>
    </location>
</feature>
<feature type="transmembrane region" description="Helical" evidence="1">
    <location>
        <begin position="19"/>
        <end position="39"/>
    </location>
</feature>
<organism>
    <name type="scientific">Salmonella paratyphi B (strain ATCC BAA-1250 / SPB7)</name>
    <dbReference type="NCBI Taxonomy" id="1016998"/>
    <lineage>
        <taxon>Bacteria</taxon>
        <taxon>Pseudomonadati</taxon>
        <taxon>Pseudomonadota</taxon>
        <taxon>Gammaproteobacteria</taxon>
        <taxon>Enterobacterales</taxon>
        <taxon>Enterobacteriaceae</taxon>
        <taxon>Salmonella</taxon>
    </lineage>
</organism>
<protein>
    <recommendedName>
        <fullName evidence="1">Biosynthetic peptidoglycan transglycosylase</fullName>
        <ecNumber evidence="1">2.4.99.28</ecNumber>
    </recommendedName>
    <alternativeName>
        <fullName evidence="1">Glycan polymerase</fullName>
    </alternativeName>
    <alternativeName>
        <fullName evidence="1">Peptidoglycan glycosyltransferase MtgA</fullName>
        <shortName evidence="1">PGT</shortName>
    </alternativeName>
</protein>
<dbReference type="EC" id="2.4.99.28" evidence="1"/>
<dbReference type="EMBL" id="CP000886">
    <property type="protein sequence ID" value="ABX69468.1"/>
    <property type="molecule type" value="Genomic_DNA"/>
</dbReference>
<dbReference type="RefSeq" id="WP_000044657.1">
    <property type="nucleotide sequence ID" value="NC_010102.1"/>
</dbReference>
<dbReference type="SMR" id="A9N776"/>
<dbReference type="CAZy" id="GT51">
    <property type="family name" value="Glycosyltransferase Family 51"/>
</dbReference>
<dbReference type="KEGG" id="spq:SPAB_04144"/>
<dbReference type="PATRIC" id="fig|1016998.12.peg.3904"/>
<dbReference type="HOGENOM" id="CLU_006354_1_1_6"/>
<dbReference type="BioCyc" id="SENT1016998:SPAB_RS16855-MONOMER"/>
<dbReference type="UniPathway" id="UPA00219"/>
<dbReference type="Proteomes" id="UP000008556">
    <property type="component" value="Chromosome"/>
</dbReference>
<dbReference type="GO" id="GO:0009274">
    <property type="term" value="C:peptidoglycan-based cell wall"/>
    <property type="evidence" value="ECO:0007669"/>
    <property type="project" value="InterPro"/>
</dbReference>
<dbReference type="GO" id="GO:0005886">
    <property type="term" value="C:plasma membrane"/>
    <property type="evidence" value="ECO:0007669"/>
    <property type="project" value="UniProtKB-SubCell"/>
</dbReference>
<dbReference type="GO" id="GO:0016763">
    <property type="term" value="F:pentosyltransferase activity"/>
    <property type="evidence" value="ECO:0007669"/>
    <property type="project" value="InterPro"/>
</dbReference>
<dbReference type="GO" id="GO:0008955">
    <property type="term" value="F:peptidoglycan glycosyltransferase activity"/>
    <property type="evidence" value="ECO:0007669"/>
    <property type="project" value="UniProtKB-UniRule"/>
</dbReference>
<dbReference type="GO" id="GO:0071555">
    <property type="term" value="P:cell wall organization"/>
    <property type="evidence" value="ECO:0007669"/>
    <property type="project" value="UniProtKB-KW"/>
</dbReference>
<dbReference type="GO" id="GO:0009252">
    <property type="term" value="P:peptidoglycan biosynthetic process"/>
    <property type="evidence" value="ECO:0007669"/>
    <property type="project" value="UniProtKB-UniRule"/>
</dbReference>
<dbReference type="GO" id="GO:0008360">
    <property type="term" value="P:regulation of cell shape"/>
    <property type="evidence" value="ECO:0007669"/>
    <property type="project" value="UniProtKB-KW"/>
</dbReference>
<dbReference type="Gene3D" id="1.10.3810.10">
    <property type="entry name" value="Biosynthetic peptidoglycan transglycosylase-like"/>
    <property type="match status" value="1"/>
</dbReference>
<dbReference type="HAMAP" id="MF_00766">
    <property type="entry name" value="PGT_MtgA"/>
    <property type="match status" value="1"/>
</dbReference>
<dbReference type="InterPro" id="IPR001264">
    <property type="entry name" value="Glyco_trans_51"/>
</dbReference>
<dbReference type="InterPro" id="IPR023346">
    <property type="entry name" value="Lysozyme-like_dom_sf"/>
</dbReference>
<dbReference type="InterPro" id="IPR036950">
    <property type="entry name" value="PBP_transglycosylase"/>
</dbReference>
<dbReference type="InterPro" id="IPR011812">
    <property type="entry name" value="Pep_trsgly"/>
</dbReference>
<dbReference type="NCBIfam" id="TIGR02070">
    <property type="entry name" value="mono_pep_trsgly"/>
    <property type="match status" value="1"/>
</dbReference>
<dbReference type="PANTHER" id="PTHR30400:SF0">
    <property type="entry name" value="BIOSYNTHETIC PEPTIDOGLYCAN TRANSGLYCOSYLASE"/>
    <property type="match status" value="1"/>
</dbReference>
<dbReference type="PANTHER" id="PTHR30400">
    <property type="entry name" value="MONOFUNCTIONAL BIOSYNTHETIC PEPTIDOGLYCAN TRANSGLYCOSYLASE"/>
    <property type="match status" value="1"/>
</dbReference>
<dbReference type="Pfam" id="PF00912">
    <property type="entry name" value="Transgly"/>
    <property type="match status" value="1"/>
</dbReference>
<dbReference type="SUPFAM" id="SSF53955">
    <property type="entry name" value="Lysozyme-like"/>
    <property type="match status" value="1"/>
</dbReference>
<keyword id="KW-0997">Cell inner membrane</keyword>
<keyword id="KW-1003">Cell membrane</keyword>
<keyword id="KW-0133">Cell shape</keyword>
<keyword id="KW-0961">Cell wall biogenesis/degradation</keyword>
<keyword id="KW-0328">Glycosyltransferase</keyword>
<keyword id="KW-0472">Membrane</keyword>
<keyword id="KW-0573">Peptidoglycan synthesis</keyword>
<keyword id="KW-0808">Transferase</keyword>
<keyword id="KW-0812">Transmembrane</keyword>
<keyword id="KW-1133">Transmembrane helix</keyword>
<name>MTGA_SALPB</name>
<sequence length="242" mass="27018">MSKRRIAPLTFLRRLLLRILAALAVFWGGGIALFSVVPVPFSAVMAERQISAWLSGEFGYVAHSDWVSMADISPWMGLAVIAAEDQKFPEHWGFDVPAIEKALAHNERNESRIRGASTLSQQTAKNLFLWDGRSWVRKGLEAGLTLGIETVWSKKRILTVYLNIAEFGDGIFGVEAAAQRYFHKPASRLSVSEAALLAAVLPNPLRYKANAPSGYVRSRQAWIMRQMRQLGGESFMTRNQLN</sequence>
<gene>
    <name evidence="1" type="primary">mtgA</name>
    <name type="ordered locus">SPAB_04144</name>
</gene>